<name>SYM_ACIF2</name>
<protein>
    <recommendedName>
        <fullName evidence="1">Methionine--tRNA ligase</fullName>
        <ecNumber evidence="1">6.1.1.10</ecNumber>
    </recommendedName>
    <alternativeName>
        <fullName evidence="1">Methionyl-tRNA synthetase</fullName>
        <shortName evidence="1">MetRS</shortName>
    </alternativeName>
</protein>
<organism>
    <name type="scientific">Acidithiobacillus ferrooxidans (strain ATCC 23270 / DSM 14882 / CIP 104768 / NCIMB 8455)</name>
    <name type="common">Ferrobacillus ferrooxidans (strain ATCC 23270)</name>
    <dbReference type="NCBI Taxonomy" id="243159"/>
    <lineage>
        <taxon>Bacteria</taxon>
        <taxon>Pseudomonadati</taxon>
        <taxon>Pseudomonadota</taxon>
        <taxon>Acidithiobacillia</taxon>
        <taxon>Acidithiobacillales</taxon>
        <taxon>Acidithiobacillaceae</taxon>
        <taxon>Acidithiobacillus</taxon>
    </lineage>
</organism>
<gene>
    <name evidence="1" type="primary">metG</name>
    <name type="ordered locus">AFE_2672</name>
</gene>
<keyword id="KW-0030">Aminoacyl-tRNA synthetase</keyword>
<keyword id="KW-0067">ATP-binding</keyword>
<keyword id="KW-0963">Cytoplasm</keyword>
<keyword id="KW-0436">Ligase</keyword>
<keyword id="KW-0479">Metal-binding</keyword>
<keyword id="KW-0547">Nucleotide-binding</keyword>
<keyword id="KW-0648">Protein biosynthesis</keyword>
<keyword id="KW-1185">Reference proteome</keyword>
<keyword id="KW-0694">RNA-binding</keyword>
<keyword id="KW-0820">tRNA-binding</keyword>
<keyword id="KW-0862">Zinc</keyword>
<proteinExistence type="inferred from homology"/>
<sequence length="678" mass="75014">MKRRILITSALPYANGPIHLGHLVEYTQTDIWARYQRLRGHDCVYVCADDAHGTPIMLRAQSEGITPEELITRMHGDHLRDFTGFGIRFDLYHSTHSPENFEISQSIYRALRAADYINVREIEQAYDPVAGIFLPDRFIRGTCPRCGAADQYGDSCEVCGATYSPTDLINPVSAVSGAVPERRNSEHYFFQLGDFSDFLRRWIHSGTLQEEVAHKLDEWFSIGLSDWDISRDAPYFGIPIPDAPGKFFYVWLDALPGYMAATQHWCAAHGRNLADYWGPDSAAEIYHFIGKDIIYFHGLFWPAMLKGSGHRLPTGIFAHGHLTVNGAKMSKSRGTSITARQYLQHLNPEFLRYYIATKLNSHVEDIDLNLEDFLLRGNGDLVGKVVNLASRAAGFIHRSFAGRLAASLGKDQAFYDGLLQTQEAIGEAYAGREYGKAMRDIMALADQINAYVDQNAPWTLAKDPAQHESLHRVVTVTLNGFRVLITLLSPVLPELSRKALEFLQCELDWAGLSKPLLDHQILPYSHLLQRMEKTQVDALIQNPAESPATAPGTAAAPVPTPVPAEAREENPFIGIDDFSKVDLRIARIVAATNVDGADKLLHLTLDIGEGTRSVFAGIKSAYDPASLVGRLTVMVANLAPRKMRFGLSEGMVLAASGPEGGPFLLSPDSGAQPGMRVK</sequence>
<comment type="function">
    <text evidence="1">Is required not only for elongation of protein synthesis but also for the initiation of all mRNA translation through initiator tRNA(fMet) aminoacylation.</text>
</comment>
<comment type="catalytic activity">
    <reaction evidence="1">
        <text>tRNA(Met) + L-methionine + ATP = L-methionyl-tRNA(Met) + AMP + diphosphate</text>
        <dbReference type="Rhea" id="RHEA:13481"/>
        <dbReference type="Rhea" id="RHEA-COMP:9667"/>
        <dbReference type="Rhea" id="RHEA-COMP:9698"/>
        <dbReference type="ChEBI" id="CHEBI:30616"/>
        <dbReference type="ChEBI" id="CHEBI:33019"/>
        <dbReference type="ChEBI" id="CHEBI:57844"/>
        <dbReference type="ChEBI" id="CHEBI:78442"/>
        <dbReference type="ChEBI" id="CHEBI:78530"/>
        <dbReference type="ChEBI" id="CHEBI:456215"/>
        <dbReference type="EC" id="6.1.1.10"/>
    </reaction>
</comment>
<comment type="cofactor">
    <cofactor evidence="1">
        <name>Zn(2+)</name>
        <dbReference type="ChEBI" id="CHEBI:29105"/>
    </cofactor>
    <text evidence="1">Binds 1 zinc ion per subunit.</text>
</comment>
<comment type="subunit">
    <text evidence="1">Homodimer.</text>
</comment>
<comment type="subcellular location">
    <subcellularLocation>
        <location evidence="1">Cytoplasm</location>
    </subcellularLocation>
</comment>
<comment type="similarity">
    <text evidence="1">Belongs to the class-I aminoacyl-tRNA synthetase family. MetG type 1 subfamily.</text>
</comment>
<accession>B7J7Y5</accession>
<reference key="1">
    <citation type="journal article" date="2008" name="BMC Genomics">
        <title>Acidithiobacillus ferrooxidans metabolism: from genome sequence to industrial applications.</title>
        <authorList>
            <person name="Valdes J."/>
            <person name="Pedroso I."/>
            <person name="Quatrini R."/>
            <person name="Dodson R.J."/>
            <person name="Tettelin H."/>
            <person name="Blake R. II"/>
            <person name="Eisen J.A."/>
            <person name="Holmes D.S."/>
        </authorList>
    </citation>
    <scope>NUCLEOTIDE SEQUENCE [LARGE SCALE GENOMIC DNA]</scope>
    <source>
        <strain>ATCC 23270 / DSM 14882 / CIP 104768 / NCIMB 8455</strain>
    </source>
</reference>
<feature type="chain" id="PRO_1000199268" description="Methionine--tRNA ligase">
    <location>
        <begin position="1"/>
        <end position="678"/>
    </location>
</feature>
<feature type="domain" description="tRNA-binding" evidence="1">
    <location>
        <begin position="577"/>
        <end position="678"/>
    </location>
</feature>
<feature type="short sequence motif" description="'HIGH' region">
    <location>
        <begin position="12"/>
        <end position="22"/>
    </location>
</feature>
<feature type="short sequence motif" description="'KMSKS' region">
    <location>
        <begin position="328"/>
        <end position="332"/>
    </location>
</feature>
<feature type="binding site" evidence="1">
    <location>
        <position position="143"/>
    </location>
    <ligand>
        <name>Zn(2+)</name>
        <dbReference type="ChEBI" id="CHEBI:29105"/>
    </ligand>
</feature>
<feature type="binding site" evidence="1">
    <location>
        <position position="146"/>
    </location>
    <ligand>
        <name>Zn(2+)</name>
        <dbReference type="ChEBI" id="CHEBI:29105"/>
    </ligand>
</feature>
<feature type="binding site" evidence="1">
    <location>
        <position position="156"/>
    </location>
    <ligand>
        <name>Zn(2+)</name>
        <dbReference type="ChEBI" id="CHEBI:29105"/>
    </ligand>
</feature>
<feature type="binding site" evidence="1">
    <location>
        <position position="159"/>
    </location>
    <ligand>
        <name>Zn(2+)</name>
        <dbReference type="ChEBI" id="CHEBI:29105"/>
    </ligand>
</feature>
<feature type="binding site" evidence="1">
    <location>
        <position position="331"/>
    </location>
    <ligand>
        <name>ATP</name>
        <dbReference type="ChEBI" id="CHEBI:30616"/>
    </ligand>
</feature>
<dbReference type="EC" id="6.1.1.10" evidence="1"/>
<dbReference type="EMBL" id="CP001219">
    <property type="protein sequence ID" value="ACK78932.1"/>
    <property type="molecule type" value="Genomic_DNA"/>
</dbReference>
<dbReference type="RefSeq" id="WP_012537326.1">
    <property type="nucleotide sequence ID" value="NC_011761.1"/>
</dbReference>
<dbReference type="SMR" id="B7J7Y5"/>
<dbReference type="STRING" id="243159.AFE_2672"/>
<dbReference type="PaxDb" id="243159-AFE_2672"/>
<dbReference type="GeneID" id="65281715"/>
<dbReference type="KEGG" id="afr:AFE_2672"/>
<dbReference type="eggNOG" id="COG0073">
    <property type="taxonomic scope" value="Bacteria"/>
</dbReference>
<dbReference type="eggNOG" id="COG0143">
    <property type="taxonomic scope" value="Bacteria"/>
</dbReference>
<dbReference type="HOGENOM" id="CLU_009710_7_0_6"/>
<dbReference type="Proteomes" id="UP000001362">
    <property type="component" value="Chromosome"/>
</dbReference>
<dbReference type="GO" id="GO:0005829">
    <property type="term" value="C:cytosol"/>
    <property type="evidence" value="ECO:0007669"/>
    <property type="project" value="TreeGrafter"/>
</dbReference>
<dbReference type="GO" id="GO:0005524">
    <property type="term" value="F:ATP binding"/>
    <property type="evidence" value="ECO:0007669"/>
    <property type="project" value="UniProtKB-UniRule"/>
</dbReference>
<dbReference type="GO" id="GO:0046872">
    <property type="term" value="F:metal ion binding"/>
    <property type="evidence" value="ECO:0007669"/>
    <property type="project" value="UniProtKB-KW"/>
</dbReference>
<dbReference type="GO" id="GO:0004825">
    <property type="term" value="F:methionine-tRNA ligase activity"/>
    <property type="evidence" value="ECO:0007669"/>
    <property type="project" value="UniProtKB-UniRule"/>
</dbReference>
<dbReference type="GO" id="GO:0000049">
    <property type="term" value="F:tRNA binding"/>
    <property type="evidence" value="ECO:0007669"/>
    <property type="project" value="UniProtKB-KW"/>
</dbReference>
<dbReference type="GO" id="GO:0006431">
    <property type="term" value="P:methionyl-tRNA aminoacylation"/>
    <property type="evidence" value="ECO:0007669"/>
    <property type="project" value="UniProtKB-UniRule"/>
</dbReference>
<dbReference type="CDD" id="cd07957">
    <property type="entry name" value="Anticodon_Ia_Met"/>
    <property type="match status" value="1"/>
</dbReference>
<dbReference type="CDD" id="cd00814">
    <property type="entry name" value="MetRS_core"/>
    <property type="match status" value="1"/>
</dbReference>
<dbReference type="CDD" id="cd02800">
    <property type="entry name" value="tRNA_bind_EcMetRS_like"/>
    <property type="match status" value="1"/>
</dbReference>
<dbReference type="FunFam" id="2.20.28.20:FF:000001">
    <property type="entry name" value="Methionine--tRNA ligase"/>
    <property type="match status" value="1"/>
</dbReference>
<dbReference type="FunFam" id="2.40.50.140:FF:000042">
    <property type="entry name" value="Methionine--tRNA ligase"/>
    <property type="match status" value="1"/>
</dbReference>
<dbReference type="Gene3D" id="3.40.50.620">
    <property type="entry name" value="HUPs"/>
    <property type="match status" value="1"/>
</dbReference>
<dbReference type="Gene3D" id="1.10.730.10">
    <property type="entry name" value="Isoleucyl-tRNA Synthetase, Domain 1"/>
    <property type="match status" value="1"/>
</dbReference>
<dbReference type="Gene3D" id="2.20.28.20">
    <property type="entry name" value="Methionyl-tRNA synthetase, Zn-domain"/>
    <property type="match status" value="1"/>
</dbReference>
<dbReference type="Gene3D" id="2.40.50.140">
    <property type="entry name" value="Nucleic acid-binding proteins"/>
    <property type="match status" value="1"/>
</dbReference>
<dbReference type="HAMAP" id="MF_00098">
    <property type="entry name" value="Met_tRNA_synth_type1"/>
    <property type="match status" value="1"/>
</dbReference>
<dbReference type="InterPro" id="IPR001412">
    <property type="entry name" value="aa-tRNA-synth_I_CS"/>
</dbReference>
<dbReference type="InterPro" id="IPR041872">
    <property type="entry name" value="Anticodon_Met"/>
</dbReference>
<dbReference type="InterPro" id="IPR004495">
    <property type="entry name" value="Met-tRNA-synth_bsu_C"/>
</dbReference>
<dbReference type="InterPro" id="IPR023458">
    <property type="entry name" value="Met-tRNA_ligase_1"/>
</dbReference>
<dbReference type="InterPro" id="IPR014758">
    <property type="entry name" value="Met-tRNA_synth"/>
</dbReference>
<dbReference type="InterPro" id="IPR015413">
    <property type="entry name" value="Methionyl/Leucyl_tRNA_Synth"/>
</dbReference>
<dbReference type="InterPro" id="IPR033911">
    <property type="entry name" value="MetRS_core"/>
</dbReference>
<dbReference type="InterPro" id="IPR029038">
    <property type="entry name" value="MetRS_Zn"/>
</dbReference>
<dbReference type="InterPro" id="IPR012340">
    <property type="entry name" value="NA-bd_OB-fold"/>
</dbReference>
<dbReference type="InterPro" id="IPR014729">
    <property type="entry name" value="Rossmann-like_a/b/a_fold"/>
</dbReference>
<dbReference type="InterPro" id="IPR002547">
    <property type="entry name" value="tRNA-bd_dom"/>
</dbReference>
<dbReference type="InterPro" id="IPR009080">
    <property type="entry name" value="tRNAsynth_Ia_anticodon-bd"/>
</dbReference>
<dbReference type="NCBIfam" id="TIGR00398">
    <property type="entry name" value="metG"/>
    <property type="match status" value="1"/>
</dbReference>
<dbReference type="NCBIfam" id="TIGR00399">
    <property type="entry name" value="metG_C_term"/>
    <property type="match status" value="1"/>
</dbReference>
<dbReference type="NCBIfam" id="NF001100">
    <property type="entry name" value="PRK00133.1"/>
    <property type="match status" value="1"/>
</dbReference>
<dbReference type="PANTHER" id="PTHR45765">
    <property type="entry name" value="METHIONINE--TRNA LIGASE"/>
    <property type="match status" value="1"/>
</dbReference>
<dbReference type="PANTHER" id="PTHR45765:SF1">
    <property type="entry name" value="METHIONINE--TRNA LIGASE, CYTOPLASMIC"/>
    <property type="match status" value="1"/>
</dbReference>
<dbReference type="Pfam" id="PF19303">
    <property type="entry name" value="Anticodon_3"/>
    <property type="match status" value="1"/>
</dbReference>
<dbReference type="Pfam" id="PF09334">
    <property type="entry name" value="tRNA-synt_1g"/>
    <property type="match status" value="1"/>
</dbReference>
<dbReference type="Pfam" id="PF01588">
    <property type="entry name" value="tRNA_bind"/>
    <property type="match status" value="1"/>
</dbReference>
<dbReference type="PRINTS" id="PR01041">
    <property type="entry name" value="TRNASYNTHMET"/>
</dbReference>
<dbReference type="SUPFAM" id="SSF47323">
    <property type="entry name" value="Anticodon-binding domain of a subclass of class I aminoacyl-tRNA synthetases"/>
    <property type="match status" value="1"/>
</dbReference>
<dbReference type="SUPFAM" id="SSF57770">
    <property type="entry name" value="Methionyl-tRNA synthetase (MetRS), Zn-domain"/>
    <property type="match status" value="1"/>
</dbReference>
<dbReference type="SUPFAM" id="SSF50249">
    <property type="entry name" value="Nucleic acid-binding proteins"/>
    <property type="match status" value="1"/>
</dbReference>
<dbReference type="SUPFAM" id="SSF52374">
    <property type="entry name" value="Nucleotidylyl transferase"/>
    <property type="match status" value="1"/>
</dbReference>
<dbReference type="PROSITE" id="PS00178">
    <property type="entry name" value="AA_TRNA_LIGASE_I"/>
    <property type="match status" value="1"/>
</dbReference>
<dbReference type="PROSITE" id="PS50886">
    <property type="entry name" value="TRBD"/>
    <property type="match status" value="1"/>
</dbReference>
<evidence type="ECO:0000255" key="1">
    <source>
        <dbReference type="HAMAP-Rule" id="MF_00098"/>
    </source>
</evidence>